<sequence>MKAFDLHRMAFDKVPFDFLGEVALRSLYTFVLVFLFLKMTGRRGVRQMSLFEVLIILTLGSAAGDVAFYDDVPMVPVLIVFITLALLYRLVMWLMAHSEKLEDLLEGKPVVIIEDGELAWSKLNNSNMTEFEFFMELRLRGVEQLGQVRLAILETNGQISVYFFEDDKVKPGLLILPSDCTQRYKVVPESADYACIRCSEIIHMKAGEKQLCPRCANPEWTKASRAKRVT</sequence>
<reference key="1">
    <citation type="journal article" date="1996" name="DNA Res.">
        <title>A 718-kb DNA sequence of the Escherichia coli K-12 genome corresponding to the 12.7-28.0 min region on the linkage map.</title>
        <authorList>
            <person name="Oshima T."/>
            <person name="Aiba H."/>
            <person name="Baba T."/>
            <person name="Fujita K."/>
            <person name="Hayashi K."/>
            <person name="Honjo A."/>
            <person name="Ikemoto K."/>
            <person name="Inada T."/>
            <person name="Itoh T."/>
            <person name="Kajihara M."/>
            <person name="Kanai K."/>
            <person name="Kashimoto K."/>
            <person name="Kimura S."/>
            <person name="Kitagawa M."/>
            <person name="Makino K."/>
            <person name="Masuda S."/>
            <person name="Miki T."/>
            <person name="Mizobuchi K."/>
            <person name="Mori H."/>
            <person name="Motomura K."/>
            <person name="Nakamura Y."/>
            <person name="Nashimoto H."/>
            <person name="Nishio Y."/>
            <person name="Saito N."/>
            <person name="Sampei G."/>
            <person name="Seki Y."/>
            <person name="Tagami H."/>
            <person name="Takemoto K."/>
            <person name="Wada C."/>
            <person name="Yamamoto Y."/>
            <person name="Yano M."/>
            <person name="Horiuchi T."/>
        </authorList>
    </citation>
    <scope>NUCLEOTIDE SEQUENCE [LARGE SCALE GENOMIC DNA]</scope>
    <source>
        <strain>K12 / W3110 / ATCC 27325 / DSM 5911</strain>
    </source>
</reference>
<reference key="2">
    <citation type="journal article" date="1997" name="Science">
        <title>The complete genome sequence of Escherichia coli K-12.</title>
        <authorList>
            <person name="Blattner F.R."/>
            <person name="Plunkett G. III"/>
            <person name="Bloch C.A."/>
            <person name="Perna N.T."/>
            <person name="Burland V."/>
            <person name="Riley M."/>
            <person name="Collado-Vides J."/>
            <person name="Glasner J.D."/>
            <person name="Rode C.K."/>
            <person name="Mayhew G.F."/>
            <person name="Gregor J."/>
            <person name="Davis N.W."/>
            <person name="Kirkpatrick H.A."/>
            <person name="Goeden M.A."/>
            <person name="Rose D.J."/>
            <person name="Mau B."/>
            <person name="Shao Y."/>
        </authorList>
    </citation>
    <scope>NUCLEOTIDE SEQUENCE [LARGE SCALE GENOMIC DNA]</scope>
    <source>
        <strain>K12 / MG1655 / ATCC 47076</strain>
    </source>
</reference>
<reference key="3">
    <citation type="journal article" date="2006" name="Mol. Syst. Biol.">
        <title>Highly accurate genome sequences of Escherichia coli K-12 strains MG1655 and W3110.</title>
        <authorList>
            <person name="Hayashi K."/>
            <person name="Morooka N."/>
            <person name="Yamamoto Y."/>
            <person name="Fujita K."/>
            <person name="Isono K."/>
            <person name="Choi S."/>
            <person name="Ohtsubo E."/>
            <person name="Baba T."/>
            <person name="Wanner B.L."/>
            <person name="Mori H."/>
            <person name="Horiuchi T."/>
        </authorList>
    </citation>
    <scope>NUCLEOTIDE SEQUENCE [LARGE SCALE GENOMIC DNA]</scope>
    <source>
        <strain>K12 / W3110 / ATCC 27325 / DSM 5911</strain>
    </source>
</reference>
<feature type="chain" id="PRO_0000168760" description="UPF0702 transmembrane protein YcaP">
    <location>
        <begin position="1"/>
        <end position="230"/>
    </location>
</feature>
<feature type="transmembrane region" description="Helical" evidence="1">
    <location>
        <begin position="16"/>
        <end position="36"/>
    </location>
</feature>
<feature type="transmembrane region" description="Helical" evidence="1">
    <location>
        <begin position="48"/>
        <end position="68"/>
    </location>
</feature>
<feature type="transmembrane region" description="Helical" evidence="1">
    <location>
        <begin position="75"/>
        <end position="95"/>
    </location>
</feature>
<evidence type="ECO:0000255" key="1"/>
<evidence type="ECO:0000305" key="2"/>
<organism>
    <name type="scientific">Escherichia coli (strain K12)</name>
    <dbReference type="NCBI Taxonomy" id="83333"/>
    <lineage>
        <taxon>Bacteria</taxon>
        <taxon>Pseudomonadati</taxon>
        <taxon>Pseudomonadota</taxon>
        <taxon>Gammaproteobacteria</taxon>
        <taxon>Enterobacterales</taxon>
        <taxon>Enterobacteriaceae</taxon>
        <taxon>Escherichia</taxon>
    </lineage>
</organism>
<accession>P75839</accession>
<proteinExistence type="inferred from homology"/>
<gene>
    <name type="primary">ycaP</name>
    <name type="ordered locus">b0906</name>
    <name type="ordered locus">JW0889</name>
</gene>
<dbReference type="EMBL" id="U00096">
    <property type="protein sequence ID" value="AAC73992.1"/>
    <property type="molecule type" value="Genomic_DNA"/>
</dbReference>
<dbReference type="EMBL" id="AP009048">
    <property type="protein sequence ID" value="BAA35641.1"/>
    <property type="molecule type" value="Genomic_DNA"/>
</dbReference>
<dbReference type="PIR" id="A64830">
    <property type="entry name" value="A64830"/>
</dbReference>
<dbReference type="RefSeq" id="NP_415426.1">
    <property type="nucleotide sequence ID" value="NC_000913.3"/>
</dbReference>
<dbReference type="RefSeq" id="WP_000642849.1">
    <property type="nucleotide sequence ID" value="NZ_STEB01000006.1"/>
</dbReference>
<dbReference type="BioGRID" id="4260005">
    <property type="interactions" value="13"/>
</dbReference>
<dbReference type="DIP" id="DIP-11471N"/>
<dbReference type="FunCoup" id="P75839">
    <property type="interactions" value="21"/>
</dbReference>
<dbReference type="STRING" id="511145.b0906"/>
<dbReference type="jPOST" id="P75839"/>
<dbReference type="PaxDb" id="511145-b0906"/>
<dbReference type="EnsemblBacteria" id="AAC73992">
    <property type="protein sequence ID" value="AAC73992"/>
    <property type="gene ID" value="b0906"/>
</dbReference>
<dbReference type="GeneID" id="945525"/>
<dbReference type="KEGG" id="ecj:JW0889"/>
<dbReference type="KEGG" id="eco:b0906"/>
<dbReference type="KEGG" id="ecoc:C3026_05590"/>
<dbReference type="PATRIC" id="fig|1411691.4.peg.1370"/>
<dbReference type="EchoBASE" id="EB3464"/>
<dbReference type="eggNOG" id="COG2323">
    <property type="taxonomic scope" value="Bacteria"/>
</dbReference>
<dbReference type="HOGENOM" id="CLU_089304_0_0_6"/>
<dbReference type="InParanoid" id="P75839"/>
<dbReference type="OMA" id="WKTDEGF"/>
<dbReference type="OrthoDB" id="6538282at2"/>
<dbReference type="PhylomeDB" id="P75839"/>
<dbReference type="BioCyc" id="EcoCyc:G6469-MONOMER"/>
<dbReference type="PRO" id="PR:P75839"/>
<dbReference type="Proteomes" id="UP000000625">
    <property type="component" value="Chromosome"/>
</dbReference>
<dbReference type="GO" id="GO:0005886">
    <property type="term" value="C:plasma membrane"/>
    <property type="evidence" value="ECO:0007669"/>
    <property type="project" value="UniProtKB-SubCell"/>
</dbReference>
<dbReference type="Gene3D" id="3.30.240.20">
    <property type="entry name" value="bsu07140 like domains"/>
    <property type="match status" value="1"/>
</dbReference>
<dbReference type="InterPro" id="IPR007353">
    <property type="entry name" value="DUF421"/>
</dbReference>
<dbReference type="InterPro" id="IPR023090">
    <property type="entry name" value="UPF0702_alpha/beta_dom_sf"/>
</dbReference>
<dbReference type="PANTHER" id="PTHR34582">
    <property type="entry name" value="UPF0702 TRANSMEMBRANE PROTEIN YCAP"/>
    <property type="match status" value="1"/>
</dbReference>
<dbReference type="PANTHER" id="PTHR34582:SF6">
    <property type="entry name" value="UPF0702 TRANSMEMBRANE PROTEIN YCAP"/>
    <property type="match status" value="1"/>
</dbReference>
<dbReference type="Pfam" id="PF04239">
    <property type="entry name" value="DUF421"/>
    <property type="match status" value="1"/>
</dbReference>
<comment type="subcellular location">
    <subcellularLocation>
        <location evidence="2">Cell membrane</location>
        <topology evidence="2">Multi-pass membrane protein</topology>
    </subcellularLocation>
</comment>
<comment type="similarity">
    <text evidence="2">Belongs to the UPF0702 family.</text>
</comment>
<protein>
    <recommendedName>
        <fullName>UPF0702 transmembrane protein YcaP</fullName>
    </recommendedName>
</protein>
<keyword id="KW-1003">Cell membrane</keyword>
<keyword id="KW-0472">Membrane</keyword>
<keyword id="KW-1185">Reference proteome</keyword>
<keyword id="KW-0812">Transmembrane</keyword>
<keyword id="KW-1133">Transmembrane helix</keyword>
<name>YCAP_ECOLI</name>